<sequence>MTRKLFGTDGVRGRANTYPMTAEIALRMGAAAGRYFRRDSSIAHRVVIGKDTRLSGYMIENALTAGLTSTGMNVLLLSPVPTPAVGLLTPSMRADLGIMISASHNPAEDNGIKLFGPDGFKLSDEVEAEIEALMASDIPLAPAAEIGRAKHVYDGLFRYIERVKSTFPTELRLDGLKVVVDCANGAAYRAAPEVLWELGADVVAMGVEPDGLNINLGCGSTKPEAAAAKIREVGAHVGICLDGDADRVVLIDETGQVADGDQIMALFAKRWADEGRLKGRTLAATVMSNLGLERFLADESIVLHRTAVGDRYVVEAMRAGGFNLGGEQSGHIVMTDYATTGDGLIAGLQFLAEMVRTGQSASTLAHNFETVPQVLKNVRFDVGAAPLDAPAVQAAIAAGEERLTGSGRLLIRKSGTEPLIRVMAEAEDEALMTAVVDDIVGAVEDAV</sequence>
<protein>
    <recommendedName>
        <fullName evidence="1">Phosphoglucosamine mutase</fullName>
        <ecNumber evidence="1">5.4.2.10</ecNumber>
    </recommendedName>
</protein>
<comment type="function">
    <text evidence="1">Catalyzes the conversion of glucosamine-6-phosphate to glucosamine-1-phosphate.</text>
</comment>
<comment type="catalytic activity">
    <reaction evidence="1">
        <text>alpha-D-glucosamine 1-phosphate = D-glucosamine 6-phosphate</text>
        <dbReference type="Rhea" id="RHEA:23424"/>
        <dbReference type="ChEBI" id="CHEBI:58516"/>
        <dbReference type="ChEBI" id="CHEBI:58725"/>
        <dbReference type="EC" id="5.4.2.10"/>
    </reaction>
</comment>
<comment type="cofactor">
    <cofactor evidence="1">
        <name>Mg(2+)</name>
        <dbReference type="ChEBI" id="CHEBI:18420"/>
    </cofactor>
    <text evidence="1">Binds 1 Mg(2+) ion per subunit.</text>
</comment>
<comment type="PTM">
    <text evidence="1">Activated by phosphorylation.</text>
</comment>
<comment type="similarity">
    <text evidence="1">Belongs to the phosphohexose mutase family.</text>
</comment>
<dbReference type="EC" id="5.4.2.10" evidence="1"/>
<dbReference type="EMBL" id="CP000264">
    <property type="protein sequence ID" value="ABD55642.1"/>
    <property type="molecule type" value="Genomic_DNA"/>
</dbReference>
<dbReference type="RefSeq" id="WP_011455846.1">
    <property type="nucleotide sequence ID" value="NC_007802.1"/>
</dbReference>
<dbReference type="SMR" id="Q28NS0"/>
<dbReference type="STRING" id="290400.Jann_2725"/>
<dbReference type="KEGG" id="jan:Jann_2725"/>
<dbReference type="eggNOG" id="COG1109">
    <property type="taxonomic scope" value="Bacteria"/>
</dbReference>
<dbReference type="HOGENOM" id="CLU_016950_7_0_5"/>
<dbReference type="OrthoDB" id="9803322at2"/>
<dbReference type="Proteomes" id="UP000008326">
    <property type="component" value="Chromosome"/>
</dbReference>
<dbReference type="GO" id="GO:0005829">
    <property type="term" value="C:cytosol"/>
    <property type="evidence" value="ECO:0007669"/>
    <property type="project" value="TreeGrafter"/>
</dbReference>
<dbReference type="GO" id="GO:0000287">
    <property type="term" value="F:magnesium ion binding"/>
    <property type="evidence" value="ECO:0007669"/>
    <property type="project" value="UniProtKB-UniRule"/>
</dbReference>
<dbReference type="GO" id="GO:0008966">
    <property type="term" value="F:phosphoglucosamine mutase activity"/>
    <property type="evidence" value="ECO:0007669"/>
    <property type="project" value="UniProtKB-UniRule"/>
</dbReference>
<dbReference type="GO" id="GO:0004615">
    <property type="term" value="F:phosphomannomutase activity"/>
    <property type="evidence" value="ECO:0007669"/>
    <property type="project" value="TreeGrafter"/>
</dbReference>
<dbReference type="GO" id="GO:0005975">
    <property type="term" value="P:carbohydrate metabolic process"/>
    <property type="evidence" value="ECO:0007669"/>
    <property type="project" value="InterPro"/>
</dbReference>
<dbReference type="GO" id="GO:0009252">
    <property type="term" value="P:peptidoglycan biosynthetic process"/>
    <property type="evidence" value="ECO:0007669"/>
    <property type="project" value="TreeGrafter"/>
</dbReference>
<dbReference type="GO" id="GO:0006048">
    <property type="term" value="P:UDP-N-acetylglucosamine biosynthetic process"/>
    <property type="evidence" value="ECO:0007669"/>
    <property type="project" value="TreeGrafter"/>
</dbReference>
<dbReference type="CDD" id="cd05802">
    <property type="entry name" value="GlmM"/>
    <property type="match status" value="1"/>
</dbReference>
<dbReference type="FunFam" id="3.30.310.50:FF:000001">
    <property type="entry name" value="Phosphoglucosamine mutase"/>
    <property type="match status" value="1"/>
</dbReference>
<dbReference type="FunFam" id="3.40.120.10:FF:000001">
    <property type="entry name" value="Phosphoglucosamine mutase"/>
    <property type="match status" value="1"/>
</dbReference>
<dbReference type="FunFam" id="3.40.120.10:FF:000003">
    <property type="entry name" value="Phosphoglucosamine mutase"/>
    <property type="match status" value="1"/>
</dbReference>
<dbReference type="Gene3D" id="3.40.120.10">
    <property type="entry name" value="Alpha-D-Glucose-1,6-Bisphosphate, subunit A, domain 3"/>
    <property type="match status" value="3"/>
</dbReference>
<dbReference type="Gene3D" id="3.30.310.50">
    <property type="entry name" value="Alpha-D-phosphohexomutase, C-terminal domain"/>
    <property type="match status" value="1"/>
</dbReference>
<dbReference type="HAMAP" id="MF_01554_B">
    <property type="entry name" value="GlmM_B"/>
    <property type="match status" value="1"/>
</dbReference>
<dbReference type="InterPro" id="IPR005844">
    <property type="entry name" value="A-D-PHexomutase_a/b/a-I"/>
</dbReference>
<dbReference type="InterPro" id="IPR016055">
    <property type="entry name" value="A-D-PHexomutase_a/b/a-I/II/III"/>
</dbReference>
<dbReference type="InterPro" id="IPR005845">
    <property type="entry name" value="A-D-PHexomutase_a/b/a-II"/>
</dbReference>
<dbReference type="InterPro" id="IPR005846">
    <property type="entry name" value="A-D-PHexomutase_a/b/a-III"/>
</dbReference>
<dbReference type="InterPro" id="IPR005843">
    <property type="entry name" value="A-D-PHexomutase_C"/>
</dbReference>
<dbReference type="InterPro" id="IPR036900">
    <property type="entry name" value="A-D-PHexomutase_C_sf"/>
</dbReference>
<dbReference type="InterPro" id="IPR016066">
    <property type="entry name" value="A-D-PHexomutase_CS"/>
</dbReference>
<dbReference type="InterPro" id="IPR005841">
    <property type="entry name" value="Alpha-D-phosphohexomutase_SF"/>
</dbReference>
<dbReference type="InterPro" id="IPR006352">
    <property type="entry name" value="GlmM_bact"/>
</dbReference>
<dbReference type="InterPro" id="IPR050060">
    <property type="entry name" value="Phosphoglucosamine_mutase"/>
</dbReference>
<dbReference type="NCBIfam" id="TIGR01455">
    <property type="entry name" value="glmM"/>
    <property type="match status" value="1"/>
</dbReference>
<dbReference type="NCBIfam" id="NF008139">
    <property type="entry name" value="PRK10887.1"/>
    <property type="match status" value="1"/>
</dbReference>
<dbReference type="PANTHER" id="PTHR42946:SF1">
    <property type="entry name" value="PHOSPHOGLUCOMUTASE (ALPHA-D-GLUCOSE-1,6-BISPHOSPHATE-DEPENDENT)"/>
    <property type="match status" value="1"/>
</dbReference>
<dbReference type="PANTHER" id="PTHR42946">
    <property type="entry name" value="PHOSPHOHEXOSE MUTASE"/>
    <property type="match status" value="1"/>
</dbReference>
<dbReference type="Pfam" id="PF02878">
    <property type="entry name" value="PGM_PMM_I"/>
    <property type="match status" value="1"/>
</dbReference>
<dbReference type="Pfam" id="PF02879">
    <property type="entry name" value="PGM_PMM_II"/>
    <property type="match status" value="1"/>
</dbReference>
<dbReference type="Pfam" id="PF02880">
    <property type="entry name" value="PGM_PMM_III"/>
    <property type="match status" value="1"/>
</dbReference>
<dbReference type="Pfam" id="PF00408">
    <property type="entry name" value="PGM_PMM_IV"/>
    <property type="match status" value="1"/>
</dbReference>
<dbReference type="PRINTS" id="PR00509">
    <property type="entry name" value="PGMPMM"/>
</dbReference>
<dbReference type="SUPFAM" id="SSF55957">
    <property type="entry name" value="Phosphoglucomutase, C-terminal domain"/>
    <property type="match status" value="1"/>
</dbReference>
<dbReference type="SUPFAM" id="SSF53738">
    <property type="entry name" value="Phosphoglucomutase, first 3 domains"/>
    <property type="match status" value="3"/>
</dbReference>
<dbReference type="PROSITE" id="PS00710">
    <property type="entry name" value="PGM_PMM"/>
    <property type="match status" value="1"/>
</dbReference>
<proteinExistence type="inferred from homology"/>
<keyword id="KW-0413">Isomerase</keyword>
<keyword id="KW-0460">Magnesium</keyword>
<keyword id="KW-0479">Metal-binding</keyword>
<keyword id="KW-0597">Phosphoprotein</keyword>
<keyword id="KW-1185">Reference proteome</keyword>
<organism>
    <name type="scientific">Jannaschia sp. (strain CCS1)</name>
    <dbReference type="NCBI Taxonomy" id="290400"/>
    <lineage>
        <taxon>Bacteria</taxon>
        <taxon>Pseudomonadati</taxon>
        <taxon>Pseudomonadota</taxon>
        <taxon>Alphaproteobacteria</taxon>
        <taxon>Rhodobacterales</taxon>
        <taxon>Roseobacteraceae</taxon>
        <taxon>Jannaschia</taxon>
    </lineage>
</organism>
<reference key="1">
    <citation type="submission" date="2006-02" db="EMBL/GenBank/DDBJ databases">
        <title>Complete sequence of chromosome of Jannaschia sp. CCS1.</title>
        <authorList>
            <consortium name="US DOE Joint Genome Institute"/>
            <person name="Copeland A."/>
            <person name="Lucas S."/>
            <person name="Lapidus A."/>
            <person name="Barry K."/>
            <person name="Detter J.C."/>
            <person name="Glavina del Rio T."/>
            <person name="Hammon N."/>
            <person name="Israni S."/>
            <person name="Pitluck S."/>
            <person name="Brettin T."/>
            <person name="Bruce D."/>
            <person name="Han C."/>
            <person name="Tapia R."/>
            <person name="Gilna P."/>
            <person name="Chertkov O."/>
            <person name="Saunders E."/>
            <person name="Schmutz J."/>
            <person name="Larimer F."/>
            <person name="Land M."/>
            <person name="Kyrpides N."/>
            <person name="Lykidis A."/>
            <person name="Moran M.A."/>
            <person name="Belas R."/>
            <person name="Ye W."/>
            <person name="Buchan A."/>
            <person name="Gonzalez J.M."/>
            <person name="Schell M.A."/>
            <person name="Richardson P."/>
        </authorList>
    </citation>
    <scope>NUCLEOTIDE SEQUENCE [LARGE SCALE GENOMIC DNA]</scope>
    <source>
        <strain>CCS1</strain>
    </source>
</reference>
<name>GLMM_JANSC</name>
<accession>Q28NS0</accession>
<feature type="chain" id="PRO_0000305643" description="Phosphoglucosamine mutase">
    <location>
        <begin position="1"/>
        <end position="447"/>
    </location>
</feature>
<feature type="active site" description="Phosphoserine intermediate" evidence="1">
    <location>
        <position position="103"/>
    </location>
</feature>
<feature type="binding site" description="via phosphate group" evidence="1">
    <location>
        <position position="103"/>
    </location>
    <ligand>
        <name>Mg(2+)</name>
        <dbReference type="ChEBI" id="CHEBI:18420"/>
    </ligand>
</feature>
<feature type="binding site" evidence="1">
    <location>
        <position position="242"/>
    </location>
    <ligand>
        <name>Mg(2+)</name>
        <dbReference type="ChEBI" id="CHEBI:18420"/>
    </ligand>
</feature>
<feature type="binding site" evidence="1">
    <location>
        <position position="244"/>
    </location>
    <ligand>
        <name>Mg(2+)</name>
        <dbReference type="ChEBI" id="CHEBI:18420"/>
    </ligand>
</feature>
<feature type="binding site" evidence="1">
    <location>
        <position position="246"/>
    </location>
    <ligand>
        <name>Mg(2+)</name>
        <dbReference type="ChEBI" id="CHEBI:18420"/>
    </ligand>
</feature>
<feature type="modified residue" description="Phosphoserine" evidence="1">
    <location>
        <position position="103"/>
    </location>
</feature>
<gene>
    <name evidence="1" type="primary">glmM</name>
    <name type="ordered locus">Jann_2725</name>
</gene>
<evidence type="ECO:0000255" key="1">
    <source>
        <dbReference type="HAMAP-Rule" id="MF_01554"/>
    </source>
</evidence>